<feature type="chain" id="PRO_0000150975" description="Zinc finger CCHC domain-containing protein 14">
    <location>
        <begin position="1"/>
        <end position="949"/>
    </location>
</feature>
<feature type="zinc finger region" description="CCHC-type" evidence="1">
    <location>
        <begin position="906"/>
        <end position="923"/>
    </location>
</feature>
<feature type="region of interest" description="Disordered" evidence="2">
    <location>
        <begin position="25"/>
        <end position="44"/>
    </location>
</feature>
<feature type="region of interest" description="Disordered" evidence="2">
    <location>
        <begin position="59"/>
        <end position="92"/>
    </location>
</feature>
<feature type="region of interest" description="Disordered" evidence="2">
    <location>
        <begin position="200"/>
        <end position="221"/>
    </location>
</feature>
<feature type="region of interest" description="Disordered" evidence="2">
    <location>
        <begin position="236"/>
        <end position="262"/>
    </location>
</feature>
<feature type="region of interest" description="Disordered" evidence="2">
    <location>
        <begin position="355"/>
        <end position="457"/>
    </location>
</feature>
<feature type="region of interest" description="Disordered" evidence="2">
    <location>
        <begin position="739"/>
        <end position="779"/>
    </location>
</feature>
<feature type="compositionally biased region" description="Gly residues" evidence="2">
    <location>
        <begin position="28"/>
        <end position="43"/>
    </location>
</feature>
<feature type="compositionally biased region" description="Polar residues" evidence="2">
    <location>
        <begin position="61"/>
        <end position="78"/>
    </location>
</feature>
<feature type="compositionally biased region" description="Low complexity" evidence="2">
    <location>
        <begin position="200"/>
        <end position="219"/>
    </location>
</feature>
<feature type="compositionally biased region" description="Basic and acidic residues" evidence="2">
    <location>
        <begin position="395"/>
        <end position="411"/>
    </location>
</feature>
<feature type="compositionally biased region" description="Low complexity" evidence="2">
    <location>
        <begin position="416"/>
        <end position="425"/>
    </location>
</feature>
<feature type="compositionally biased region" description="Basic and acidic residues" evidence="2">
    <location>
        <begin position="431"/>
        <end position="457"/>
    </location>
</feature>
<feature type="splice variant" id="VSP_013843" description="In isoform 2." evidence="5">
    <original>TFRLKYAPPAESLDSTD</original>
    <variation>KRAPWPRPPGSRRTSAHKCLVFMKSKLLSL</variation>
    <location>
        <begin position="933"/>
        <end position="949"/>
    </location>
</feature>
<feature type="sequence variant" id="VAR_053754" description="In dbSNP:rs11648852.">
    <original>I</original>
    <variation>V</variation>
    <location>
        <position position="54"/>
    </location>
</feature>
<feature type="sequence variant" id="VAR_053755" description="In dbSNP:rs13338940.">
    <original>G</original>
    <variation>A</variation>
    <location>
        <position position="244"/>
    </location>
</feature>
<feature type="sequence variant" id="VAR_036492" description="In a breast cancer sample; somatic mutation." evidence="4">
    <original>L</original>
    <variation>V</variation>
    <location>
        <position position="290"/>
    </location>
</feature>
<feature type="sequence variant" id="VAR_024703" description="In dbSNP:rs3748400." evidence="3">
    <original>V</original>
    <variation>M</variation>
    <location>
        <position position="693"/>
    </location>
</feature>
<proteinExistence type="evidence at protein level"/>
<organism>
    <name type="scientific">Homo sapiens</name>
    <name type="common">Human</name>
    <dbReference type="NCBI Taxonomy" id="9606"/>
    <lineage>
        <taxon>Eukaryota</taxon>
        <taxon>Metazoa</taxon>
        <taxon>Chordata</taxon>
        <taxon>Craniata</taxon>
        <taxon>Vertebrata</taxon>
        <taxon>Euteleostomi</taxon>
        <taxon>Mammalia</taxon>
        <taxon>Eutheria</taxon>
        <taxon>Euarchontoglires</taxon>
        <taxon>Primates</taxon>
        <taxon>Haplorrhini</taxon>
        <taxon>Catarrhini</taxon>
        <taxon>Hominidae</taxon>
        <taxon>Homo</taxon>
    </lineage>
</organism>
<sequence>MASNHPAFSFHQKQVLRQELTQIQSSLNGGGGHGGKGAPGPGGALPTCPACHKITPRTEAPVSSVSNSLENALHTSAHSTEESLPKRPLGKHSKVSVEKIDLKGLSHTKNDRNVECSFEVLWSDSSITSVTKSSSEVTEFISKLCQLYPEENLEKLIPCLAGPDAFYVERNHVDLDSGLRYLASLPSHVLKNDHVRRFLSTSSPPQQLQSPSPGNPSLSKVGTVMGVSGRPVCGVAGIPSSQSGAQHHGQHPAGSAAPLPHCSHAGSAGSALAYRTQMDTSPAILMPSSLQTPQTQEQNGILDWLRKLRLHKYYPVFKQLSMEKFLSLTEEDLNKFESLTMGAKKKLKTQLELEKEKSERRCLNPSAPPLVTSSGVARVPPTSHVGPVQSGRGSHAAELRVEVEQPHHQLPREGSSSEYSSSSSSPMGVQAREESSDSAEENDRRVEIHLESSDKEKPVMLLNHFTSSSARPTAQVLPVQNEASSNPSGHHPLPPQMLSAASHITPIRMLNSVHKPERGSADMKLLSSSVHSLLSLEERNKGSGPRSSMKVDKSFGSAMMDVLPASAPHQPVQVLSGLSESSSMSPTVSFGPRTKVVHASTLDRVLKTAQQPALVVETSTAATGTPSTVLHAARPPIKLLLSSSVPADSAISGQTSCPNNVQISVPPAIINPRTALYTANTKVAFSAMSSMPVGPLQGGFCANSNTASPSSHPSTSFANMATLPSCPAPSSSPALSSVPESSFYSSSGGGGSTGNIPASNPNHHHHHHHQQPPAPPQPAPPPPGCIVCTSCGCSGSCGSSGLTVSYANYFQHPFSGPSVFTFPFLPFSPMCSSGYVSAQQYGGGSTFPVVHAPYSSSGTPDPVLSGQSTFAVPPMQNFMAGTAGVYQTQGLVGSSNGSSHKKSGNLSCYNCGATGHRAQDCKQPSMDFNRPGTFRLKYAPPAESLDSTD</sequence>
<comment type="interaction">
    <interactant intactId="EBI-3937908">
        <id>Q8WYQ9</id>
    </interactant>
    <interactant intactId="EBI-3867333">
        <id>A8MQ03</id>
        <label>CYSRT1</label>
    </interactant>
    <organismsDiffer>false</organismsDiffer>
    <experiments>3</experiments>
</comment>
<comment type="interaction">
    <interactant intactId="EBI-3937908">
        <id>Q8WYQ9</id>
    </interactant>
    <interactant intactId="EBI-741101">
        <id>Q13643</id>
        <label>FHL3</label>
    </interactant>
    <organismsDiffer>false</organismsDiffer>
    <experiments>3</experiments>
</comment>
<comment type="interaction">
    <interactant intactId="EBI-3937908">
        <id>Q8WYQ9</id>
    </interactant>
    <interactant intactId="EBI-7950783">
        <id>Q96JP2</id>
        <label>MYO15B</label>
    </interactant>
    <organismsDiffer>false</organismsDiffer>
    <experiments>3</experiments>
</comment>
<comment type="interaction">
    <interactant intactId="EBI-3937908">
        <id>Q8WYQ9</id>
    </interactant>
    <interactant intactId="EBI-3906629">
        <id>P15173</id>
        <label>MYOG</label>
    </interactant>
    <organismsDiffer>false</organismsDiffer>
    <experiments>3</experiments>
</comment>
<comment type="interaction">
    <interactant intactId="EBI-3937908">
        <id>Q8WYQ9</id>
    </interactant>
    <interactant intactId="EBI-949255">
        <id>Q58EX7</id>
        <label>PLEKHG4</label>
    </interactant>
    <organismsDiffer>false</organismsDiffer>
    <experiments>3</experiments>
</comment>
<comment type="interaction">
    <interactant intactId="EBI-3937908">
        <id>Q8WYQ9</id>
    </interactant>
    <interactant intactId="EBI-12754095">
        <id>P86480</id>
        <label>PRR20D</label>
    </interactant>
    <organismsDiffer>false</organismsDiffer>
    <experiments>3</experiments>
</comment>
<comment type="interaction">
    <interactant intactId="EBI-3937908">
        <id>Q8WYQ9</id>
    </interactant>
    <interactant intactId="EBI-949753">
        <id>Q63HR2</id>
        <label>TNS2</label>
    </interactant>
    <organismsDiffer>false</organismsDiffer>
    <experiments>3</experiments>
</comment>
<comment type="interaction">
    <interactant intactId="EBI-3937908">
        <id>Q8WYQ9</id>
    </interactant>
    <interactant intactId="EBI-11975223">
        <id>Q70EL1-9</id>
        <label>USP54</label>
    </interactant>
    <organismsDiffer>false</organismsDiffer>
    <experiments>3</experiments>
</comment>
<comment type="alternative products">
    <event type="alternative splicing"/>
    <isoform>
        <id>Q8WYQ9-1</id>
        <name>1</name>
        <sequence type="displayed"/>
    </isoform>
    <isoform>
        <id>Q8WYQ9-2</id>
        <name>2</name>
        <sequence type="described" ref="VSP_013843"/>
    </isoform>
</comment>
<name>ZCH14_HUMAN</name>
<dbReference type="EMBL" id="AB030243">
    <property type="protein sequence ID" value="BAB83129.1"/>
    <property type="molecule type" value="mRNA"/>
</dbReference>
<dbReference type="EMBL" id="CH471114">
    <property type="protein sequence ID" value="EAW95389.1"/>
    <property type="molecule type" value="Genomic_DNA"/>
</dbReference>
<dbReference type="EMBL" id="CH471114">
    <property type="protein sequence ID" value="EAW95390.1"/>
    <property type="molecule type" value="Genomic_DNA"/>
</dbReference>
<dbReference type="EMBL" id="BC101478">
    <property type="protein sequence ID" value="AAI01479.1"/>
    <property type="molecule type" value="mRNA"/>
</dbReference>
<dbReference type="EMBL" id="AB011151">
    <property type="protein sequence ID" value="BAA25505.2"/>
    <property type="molecule type" value="mRNA"/>
</dbReference>
<dbReference type="EMBL" id="AL117532">
    <property type="protein sequence ID" value="CAB55981.1"/>
    <property type="molecule type" value="mRNA"/>
</dbReference>
<dbReference type="PIR" id="T17291">
    <property type="entry name" value="T17291"/>
</dbReference>
<dbReference type="RefSeq" id="NP_055959.1">
    <property type="nucleotide sequence ID" value="NM_015144.2"/>
</dbReference>
<dbReference type="RefSeq" id="XP_005255915.2">
    <property type="nucleotide sequence ID" value="XM_005255858.3"/>
</dbReference>
<dbReference type="SMR" id="Q8WYQ9"/>
<dbReference type="BioGRID" id="116786">
    <property type="interactions" value="43"/>
</dbReference>
<dbReference type="FunCoup" id="Q8WYQ9">
    <property type="interactions" value="704"/>
</dbReference>
<dbReference type="IntAct" id="Q8WYQ9">
    <property type="interactions" value="14"/>
</dbReference>
<dbReference type="STRING" id="9606.ENSP00000268616"/>
<dbReference type="GlyCosmos" id="Q8WYQ9">
    <property type="glycosylation" value="1 site, 1 glycan"/>
</dbReference>
<dbReference type="GlyGen" id="Q8WYQ9">
    <property type="glycosylation" value="7 sites, 1 N-linked glycan (1 site), 1 O-linked glycan (5 sites)"/>
</dbReference>
<dbReference type="iPTMnet" id="Q8WYQ9"/>
<dbReference type="PhosphoSitePlus" id="Q8WYQ9"/>
<dbReference type="BioMuta" id="ZCCHC14"/>
<dbReference type="DMDM" id="67462073"/>
<dbReference type="jPOST" id="Q8WYQ9"/>
<dbReference type="MassIVE" id="Q8WYQ9"/>
<dbReference type="PaxDb" id="9606-ENSP00000268616"/>
<dbReference type="PeptideAtlas" id="Q8WYQ9"/>
<dbReference type="ProteomicsDB" id="75192">
    <molecule id="Q8WYQ9-1"/>
</dbReference>
<dbReference type="ProteomicsDB" id="75193">
    <molecule id="Q8WYQ9-2"/>
</dbReference>
<dbReference type="Antibodypedia" id="2893">
    <property type="antibodies" value="68 antibodies from 17 providers"/>
</dbReference>
<dbReference type="DNASU" id="23174"/>
<dbReference type="Ensembl" id="ENST00000268616.9">
    <molecule id="Q8WYQ9-1"/>
    <property type="protein sequence ID" value="ENSP00000268616.4"/>
    <property type="gene ID" value="ENSG00000140948.13"/>
</dbReference>
<dbReference type="GeneID" id="23174"/>
<dbReference type="KEGG" id="hsa:23174"/>
<dbReference type="UCSC" id="uc002fjz.2">
    <molecule id="Q8WYQ9-1"/>
    <property type="organism name" value="human"/>
</dbReference>
<dbReference type="AGR" id="HGNC:24134"/>
<dbReference type="CTD" id="23174"/>
<dbReference type="DisGeNET" id="23174"/>
<dbReference type="GeneCards" id="ZCCHC14"/>
<dbReference type="HGNC" id="HGNC:24134">
    <property type="gene designation" value="ZCCHC14"/>
</dbReference>
<dbReference type="HPA" id="ENSG00000140948">
    <property type="expression patterns" value="Low tissue specificity"/>
</dbReference>
<dbReference type="MIM" id="620697">
    <property type="type" value="gene"/>
</dbReference>
<dbReference type="neXtProt" id="NX_Q8WYQ9"/>
<dbReference type="OpenTargets" id="ENSG00000140948"/>
<dbReference type="PharmGKB" id="PA134895795"/>
<dbReference type="VEuPathDB" id="HostDB:ENSG00000140948"/>
<dbReference type="eggNOG" id="KOG3791">
    <property type="taxonomic scope" value="Eukaryota"/>
</dbReference>
<dbReference type="eggNOG" id="KOG4400">
    <property type="taxonomic scope" value="Eukaryota"/>
</dbReference>
<dbReference type="GeneTree" id="ENSGT00520000055637"/>
<dbReference type="HOGENOM" id="CLU_014508_0_0_1"/>
<dbReference type="InParanoid" id="Q8WYQ9"/>
<dbReference type="OMA" id="NFGPRTK"/>
<dbReference type="OrthoDB" id="6361509at2759"/>
<dbReference type="PAN-GO" id="Q8WYQ9">
    <property type="GO annotations" value="0 GO annotations based on evolutionary models"/>
</dbReference>
<dbReference type="PhylomeDB" id="Q8WYQ9"/>
<dbReference type="TreeFam" id="TF335574"/>
<dbReference type="PathwayCommons" id="Q8WYQ9"/>
<dbReference type="SignaLink" id="Q8WYQ9"/>
<dbReference type="BioGRID-ORCS" id="23174">
    <property type="hits" value="35 hits in 1161 CRISPR screens"/>
</dbReference>
<dbReference type="CD-CODE" id="232F8A39">
    <property type="entry name" value="P-body"/>
</dbReference>
<dbReference type="CD-CODE" id="DEE660B4">
    <property type="entry name" value="Stress granule"/>
</dbReference>
<dbReference type="ChiTaRS" id="ZCCHC14">
    <property type="organism name" value="human"/>
</dbReference>
<dbReference type="GenomeRNAi" id="23174"/>
<dbReference type="Pharos" id="Q8WYQ9">
    <property type="development level" value="Tbio"/>
</dbReference>
<dbReference type="PRO" id="PR:Q8WYQ9"/>
<dbReference type="Proteomes" id="UP000005640">
    <property type="component" value="Chromosome 16"/>
</dbReference>
<dbReference type="RNAct" id="Q8WYQ9">
    <property type="molecule type" value="protein"/>
</dbReference>
<dbReference type="Bgee" id="ENSG00000140948">
    <property type="expression patterns" value="Expressed in secondary oocyte and 208 other cell types or tissues"/>
</dbReference>
<dbReference type="ExpressionAtlas" id="Q8WYQ9">
    <property type="expression patterns" value="baseline and differential"/>
</dbReference>
<dbReference type="GO" id="GO:0003676">
    <property type="term" value="F:nucleic acid binding"/>
    <property type="evidence" value="ECO:0007669"/>
    <property type="project" value="InterPro"/>
</dbReference>
<dbReference type="GO" id="GO:0035091">
    <property type="term" value="F:phosphatidylinositol binding"/>
    <property type="evidence" value="ECO:0007669"/>
    <property type="project" value="InterPro"/>
</dbReference>
<dbReference type="GO" id="GO:0008270">
    <property type="term" value="F:zinc ion binding"/>
    <property type="evidence" value="ECO:0007669"/>
    <property type="project" value="UniProtKB-KW"/>
</dbReference>
<dbReference type="CDD" id="cd09558">
    <property type="entry name" value="SAM_ZCCH14"/>
    <property type="match status" value="1"/>
</dbReference>
<dbReference type="Gene3D" id="3.30.1520.10">
    <property type="entry name" value="Phox-like domain"/>
    <property type="match status" value="1"/>
</dbReference>
<dbReference type="Gene3D" id="1.10.150.50">
    <property type="entry name" value="Transcription Factor, Ets-1"/>
    <property type="match status" value="1"/>
</dbReference>
<dbReference type="Gene3D" id="4.10.60.10">
    <property type="entry name" value="Zinc finger, CCHC-type"/>
    <property type="match status" value="1"/>
</dbReference>
<dbReference type="InterPro" id="IPR036871">
    <property type="entry name" value="PX_dom_sf"/>
</dbReference>
<dbReference type="InterPro" id="IPR001660">
    <property type="entry name" value="SAM"/>
</dbReference>
<dbReference type="InterPro" id="IPR013761">
    <property type="entry name" value="SAM/pointed_sf"/>
</dbReference>
<dbReference type="InterPro" id="IPR037632">
    <property type="entry name" value="ZCCH14_SAM"/>
</dbReference>
<dbReference type="InterPro" id="IPR042344">
    <property type="entry name" value="ZCCHC14"/>
</dbReference>
<dbReference type="InterPro" id="IPR001878">
    <property type="entry name" value="Znf_CCHC"/>
</dbReference>
<dbReference type="InterPro" id="IPR036875">
    <property type="entry name" value="Znf_CCHC_sf"/>
</dbReference>
<dbReference type="PANTHER" id="PTHR16195">
    <property type="entry name" value="ZINC FINGER CCHC DOMAIN CONTAINING PROTEIN"/>
    <property type="match status" value="1"/>
</dbReference>
<dbReference type="PANTHER" id="PTHR16195:SF16">
    <property type="entry name" value="ZINC FINGER CCHC DOMAIN-CONTAINING PROTEIN 14"/>
    <property type="match status" value="1"/>
</dbReference>
<dbReference type="Pfam" id="PF00536">
    <property type="entry name" value="SAM_1"/>
    <property type="match status" value="1"/>
</dbReference>
<dbReference type="Pfam" id="PF00098">
    <property type="entry name" value="zf-CCHC"/>
    <property type="match status" value="1"/>
</dbReference>
<dbReference type="SMART" id="SM00343">
    <property type="entry name" value="ZnF_C2HC"/>
    <property type="match status" value="1"/>
</dbReference>
<dbReference type="SUPFAM" id="SSF64268">
    <property type="entry name" value="PX domain"/>
    <property type="match status" value="1"/>
</dbReference>
<dbReference type="SUPFAM" id="SSF57756">
    <property type="entry name" value="Retrovirus zinc finger-like domains"/>
    <property type="match status" value="1"/>
</dbReference>
<dbReference type="SUPFAM" id="SSF47769">
    <property type="entry name" value="SAM/Pointed domain"/>
    <property type="match status" value="1"/>
</dbReference>
<dbReference type="PROSITE" id="PS50158">
    <property type="entry name" value="ZF_CCHC"/>
    <property type="match status" value="1"/>
</dbReference>
<protein>
    <recommendedName>
        <fullName>Zinc finger CCHC domain-containing protein 14</fullName>
    </recommendedName>
    <alternativeName>
        <fullName>BDG-29</fullName>
    </alternativeName>
</protein>
<keyword id="KW-0025">Alternative splicing</keyword>
<keyword id="KW-0479">Metal-binding</keyword>
<keyword id="KW-1267">Proteomics identification</keyword>
<keyword id="KW-1185">Reference proteome</keyword>
<keyword id="KW-0862">Zinc</keyword>
<keyword id="KW-0863">Zinc-finger</keyword>
<evidence type="ECO:0000255" key="1">
    <source>
        <dbReference type="PROSITE-ProRule" id="PRU00047"/>
    </source>
</evidence>
<evidence type="ECO:0000256" key="2">
    <source>
        <dbReference type="SAM" id="MobiDB-lite"/>
    </source>
</evidence>
<evidence type="ECO:0000269" key="3">
    <source>
    </source>
</evidence>
<evidence type="ECO:0000269" key="4">
    <source>
    </source>
</evidence>
<evidence type="ECO:0000303" key="5">
    <source>
    </source>
</evidence>
<accession>Q8WYQ9</accession>
<accession>D3DUN1</accession>
<accession>O60324</accession>
<accession>Q3MJD8</accession>
<accession>Q9UFP0</accession>
<reference key="1">
    <citation type="submission" date="1999-07" db="EMBL/GenBank/DDBJ databases">
        <title>Isolation and characterization of a novel downstream gene of beta-catenin.</title>
        <authorList>
            <person name="Kawasoe T."/>
            <person name="Furukawa Y."/>
            <person name="Daigo Y."/>
            <person name="Ishiguro H."/>
            <person name="Nishiwaki T."/>
            <person name="Fujita M."/>
            <person name="Nagasawa Y."/>
            <person name="Miyoshi Y."/>
            <person name="Nakamura Y."/>
        </authorList>
    </citation>
    <scope>NUCLEOTIDE SEQUENCE [MRNA] (ISOFORM 1)</scope>
</reference>
<reference key="2">
    <citation type="submission" date="2005-09" db="EMBL/GenBank/DDBJ databases">
        <authorList>
            <person name="Mural R.J."/>
            <person name="Istrail S."/>
            <person name="Sutton G.G."/>
            <person name="Florea L."/>
            <person name="Halpern A.L."/>
            <person name="Mobarry C.M."/>
            <person name="Lippert R."/>
            <person name="Walenz B."/>
            <person name="Shatkay H."/>
            <person name="Dew I."/>
            <person name="Miller J.R."/>
            <person name="Flanigan M.J."/>
            <person name="Edwards N.J."/>
            <person name="Bolanos R."/>
            <person name="Fasulo D."/>
            <person name="Halldorsson B.V."/>
            <person name="Hannenhalli S."/>
            <person name="Turner R."/>
            <person name="Yooseph S."/>
            <person name="Lu F."/>
            <person name="Nusskern D.R."/>
            <person name="Shue B.C."/>
            <person name="Zheng X.H."/>
            <person name="Zhong F."/>
            <person name="Delcher A.L."/>
            <person name="Huson D.H."/>
            <person name="Kravitz S.A."/>
            <person name="Mouchard L."/>
            <person name="Reinert K."/>
            <person name="Remington K.A."/>
            <person name="Clark A.G."/>
            <person name="Waterman M.S."/>
            <person name="Eichler E.E."/>
            <person name="Adams M.D."/>
            <person name="Hunkapiller M.W."/>
            <person name="Myers E.W."/>
            <person name="Venter J.C."/>
        </authorList>
    </citation>
    <scope>NUCLEOTIDE SEQUENCE [LARGE SCALE GENOMIC DNA]</scope>
</reference>
<reference key="3">
    <citation type="journal article" date="2004" name="Genome Res.">
        <title>The status, quality, and expansion of the NIH full-length cDNA project: the Mammalian Gene Collection (MGC).</title>
        <authorList>
            <consortium name="The MGC Project Team"/>
        </authorList>
    </citation>
    <scope>NUCLEOTIDE SEQUENCE [LARGE SCALE MRNA] (ISOFORM 1)</scope>
    <scope>VARIANT MET-693</scope>
    <source>
        <tissue>Brain</tissue>
    </source>
</reference>
<reference key="4">
    <citation type="journal article" date="1998" name="DNA Res.">
        <title>Prediction of the coding sequences of unidentified human genes. IX. The complete sequences of 100 new cDNA clones from brain which can code for large proteins in vitro.</title>
        <authorList>
            <person name="Nagase T."/>
            <person name="Ishikawa K."/>
            <person name="Miyajima N."/>
            <person name="Tanaka A."/>
            <person name="Kotani H."/>
            <person name="Nomura N."/>
            <person name="Ohara O."/>
        </authorList>
    </citation>
    <scope>NUCLEOTIDE SEQUENCE [LARGE SCALE MRNA] OF 40-949 (ISOFORM 1)</scope>
    <source>
        <tissue>Brain</tissue>
    </source>
</reference>
<reference key="5">
    <citation type="journal article" date="2002" name="DNA Res.">
        <title>Construction of expression-ready cDNA clones for KIAA genes: manual curation of 330 KIAA cDNA clones.</title>
        <authorList>
            <person name="Nakajima D."/>
            <person name="Okazaki N."/>
            <person name="Yamakawa H."/>
            <person name="Kikuno R."/>
            <person name="Ohara O."/>
            <person name="Nagase T."/>
        </authorList>
    </citation>
    <scope>SEQUENCE REVISION</scope>
</reference>
<reference key="6">
    <citation type="journal article" date="2007" name="BMC Genomics">
        <title>The full-ORF clone resource of the German cDNA consortium.</title>
        <authorList>
            <person name="Bechtel S."/>
            <person name="Rosenfelder H."/>
            <person name="Duda A."/>
            <person name="Schmidt C.P."/>
            <person name="Ernst U."/>
            <person name="Wellenreuther R."/>
            <person name="Mehrle A."/>
            <person name="Schuster C."/>
            <person name="Bahr A."/>
            <person name="Bloecker H."/>
            <person name="Heubner D."/>
            <person name="Hoerlein A."/>
            <person name="Michel G."/>
            <person name="Wedler H."/>
            <person name="Koehrer K."/>
            <person name="Ottenwaelder B."/>
            <person name="Poustka A."/>
            <person name="Wiemann S."/>
            <person name="Schupp I."/>
        </authorList>
    </citation>
    <scope>NUCLEOTIDE SEQUENCE [LARGE SCALE MRNA] OF 118-949 (ISOFORM 2)</scope>
    <source>
        <tissue>Testis</tissue>
    </source>
</reference>
<reference key="7">
    <citation type="journal article" date="2006" name="Science">
        <title>The consensus coding sequences of human breast and colorectal cancers.</title>
        <authorList>
            <person name="Sjoeblom T."/>
            <person name="Jones S."/>
            <person name="Wood L.D."/>
            <person name="Parsons D.W."/>
            <person name="Lin J."/>
            <person name="Barber T.D."/>
            <person name="Mandelker D."/>
            <person name="Leary R.J."/>
            <person name="Ptak J."/>
            <person name="Silliman N."/>
            <person name="Szabo S."/>
            <person name="Buckhaults P."/>
            <person name="Farrell C."/>
            <person name="Meeh P."/>
            <person name="Markowitz S.D."/>
            <person name="Willis J."/>
            <person name="Dawson D."/>
            <person name="Willson J.K.V."/>
            <person name="Gazdar A.F."/>
            <person name="Hartigan J."/>
            <person name="Wu L."/>
            <person name="Liu C."/>
            <person name="Parmigiani G."/>
            <person name="Park B.H."/>
            <person name="Bachman K.E."/>
            <person name="Papadopoulos N."/>
            <person name="Vogelstein B."/>
            <person name="Kinzler K.W."/>
            <person name="Velculescu V.E."/>
        </authorList>
    </citation>
    <scope>VARIANT [LARGE SCALE ANALYSIS] VAL-290</scope>
</reference>
<gene>
    <name type="primary">ZCCHC14</name>
    <name type="synonym">KIAA0579</name>
</gene>